<keyword id="KW-0067">ATP-binding</keyword>
<keyword id="KW-0963">Cytoplasm</keyword>
<keyword id="KW-0418">Kinase</keyword>
<keyword id="KW-0460">Magnesium</keyword>
<keyword id="KW-0479">Metal-binding</keyword>
<keyword id="KW-0547">Nucleotide-binding</keyword>
<keyword id="KW-0808">Transferase</keyword>
<sequence>MSKTIAINAGSSSLKWQLYQMPEEEVLAQGIIERIGLKDSISTVKYDGKKEEQILDIHDHTEAVKILLNDLIHFGIIAAYDEITGVGHRVVAGGELFKESVVVNDKVLEQIEELSVLAPLHNPGAAAGIRAFRDILPDITSVCVFDTSFHTSMAKHTYLYPIPQKYYTDYKVRKYGAHGTSHKYVAQEAAKMLGRPLEELKLITAHIGNGVSITANYHGKSVDTSMGFTPLAGPMMGTRSGDIDPAIIPYLIEQDPELKDAADVVNMLNKKSGLSGVSGISSDMRDIEAGLQEDNPDAVLAYNIFIDRIKKCIGQYFAVLNGADALVFTAGMGENAPLMRQDVIGGLTWFGMDIDPEKNVFGYRGEISTPESKVKVLVISTDEELCIARDVERLKNTK</sequence>
<dbReference type="EC" id="2.7.2.1" evidence="1"/>
<dbReference type="EMBL" id="CP000056">
    <property type="protein sequence ID" value="AAX71206.1"/>
    <property type="molecule type" value="Genomic_DNA"/>
</dbReference>
<dbReference type="RefSeq" id="WP_011284424.1">
    <property type="nucleotide sequence ID" value="NC_007296.2"/>
</dbReference>
<dbReference type="SMR" id="Q48VQ0"/>
<dbReference type="KEGG" id="spb:M28_Spy0092"/>
<dbReference type="HOGENOM" id="CLU_020352_0_1_9"/>
<dbReference type="UniPathway" id="UPA00340">
    <property type="reaction ID" value="UER00458"/>
</dbReference>
<dbReference type="GO" id="GO:0005737">
    <property type="term" value="C:cytoplasm"/>
    <property type="evidence" value="ECO:0007669"/>
    <property type="project" value="UniProtKB-SubCell"/>
</dbReference>
<dbReference type="GO" id="GO:0008776">
    <property type="term" value="F:acetate kinase activity"/>
    <property type="evidence" value="ECO:0007669"/>
    <property type="project" value="UniProtKB-UniRule"/>
</dbReference>
<dbReference type="GO" id="GO:0005524">
    <property type="term" value="F:ATP binding"/>
    <property type="evidence" value="ECO:0007669"/>
    <property type="project" value="UniProtKB-KW"/>
</dbReference>
<dbReference type="GO" id="GO:0000287">
    <property type="term" value="F:magnesium ion binding"/>
    <property type="evidence" value="ECO:0007669"/>
    <property type="project" value="UniProtKB-UniRule"/>
</dbReference>
<dbReference type="GO" id="GO:0006083">
    <property type="term" value="P:acetate metabolic process"/>
    <property type="evidence" value="ECO:0007669"/>
    <property type="project" value="TreeGrafter"/>
</dbReference>
<dbReference type="GO" id="GO:0006085">
    <property type="term" value="P:acetyl-CoA biosynthetic process"/>
    <property type="evidence" value="ECO:0007669"/>
    <property type="project" value="UniProtKB-UniRule"/>
</dbReference>
<dbReference type="CDD" id="cd24010">
    <property type="entry name" value="ASKHA_NBD_AcK_PK"/>
    <property type="match status" value="1"/>
</dbReference>
<dbReference type="Gene3D" id="3.30.420.40">
    <property type="match status" value="2"/>
</dbReference>
<dbReference type="HAMAP" id="MF_00020">
    <property type="entry name" value="Acetate_kinase"/>
    <property type="match status" value="1"/>
</dbReference>
<dbReference type="InterPro" id="IPR004372">
    <property type="entry name" value="Ac/propionate_kinase"/>
</dbReference>
<dbReference type="InterPro" id="IPR000890">
    <property type="entry name" value="Aliphatic_acid_kin_short-chain"/>
</dbReference>
<dbReference type="InterPro" id="IPR023865">
    <property type="entry name" value="Aliphatic_acid_kinase_CS"/>
</dbReference>
<dbReference type="InterPro" id="IPR043129">
    <property type="entry name" value="ATPase_NBD"/>
</dbReference>
<dbReference type="NCBIfam" id="TIGR00016">
    <property type="entry name" value="ackA"/>
    <property type="match status" value="1"/>
</dbReference>
<dbReference type="PANTHER" id="PTHR21060">
    <property type="entry name" value="ACETATE KINASE"/>
    <property type="match status" value="1"/>
</dbReference>
<dbReference type="PANTHER" id="PTHR21060:SF15">
    <property type="entry name" value="ACETATE KINASE-RELATED"/>
    <property type="match status" value="1"/>
</dbReference>
<dbReference type="Pfam" id="PF00871">
    <property type="entry name" value="Acetate_kinase"/>
    <property type="match status" value="1"/>
</dbReference>
<dbReference type="PIRSF" id="PIRSF000722">
    <property type="entry name" value="Acetate_prop_kin"/>
    <property type="match status" value="1"/>
</dbReference>
<dbReference type="PRINTS" id="PR00471">
    <property type="entry name" value="ACETATEKNASE"/>
</dbReference>
<dbReference type="SUPFAM" id="SSF53067">
    <property type="entry name" value="Actin-like ATPase domain"/>
    <property type="match status" value="2"/>
</dbReference>
<dbReference type="PROSITE" id="PS01075">
    <property type="entry name" value="ACETATE_KINASE_1"/>
    <property type="match status" value="1"/>
</dbReference>
<dbReference type="PROSITE" id="PS01076">
    <property type="entry name" value="ACETATE_KINASE_2"/>
    <property type="match status" value="1"/>
</dbReference>
<accession>Q48VQ0</accession>
<reference key="1">
    <citation type="journal article" date="2005" name="J. Infect. Dis.">
        <title>Genome sequence of a serotype M28 strain of group A Streptococcus: potential new insights into puerperal sepsis and bacterial disease specificity.</title>
        <authorList>
            <person name="Green N.M."/>
            <person name="Zhang S."/>
            <person name="Porcella S.F."/>
            <person name="Nagiec M.J."/>
            <person name="Barbian K.D."/>
            <person name="Beres S.B."/>
            <person name="Lefebvre R.B."/>
            <person name="Musser J.M."/>
        </authorList>
    </citation>
    <scope>NUCLEOTIDE SEQUENCE [LARGE SCALE GENOMIC DNA]</scope>
    <source>
        <strain>MGAS6180</strain>
    </source>
</reference>
<organism>
    <name type="scientific">Streptococcus pyogenes serotype M28 (strain MGAS6180)</name>
    <dbReference type="NCBI Taxonomy" id="319701"/>
    <lineage>
        <taxon>Bacteria</taxon>
        <taxon>Bacillati</taxon>
        <taxon>Bacillota</taxon>
        <taxon>Bacilli</taxon>
        <taxon>Lactobacillales</taxon>
        <taxon>Streptococcaceae</taxon>
        <taxon>Streptococcus</taxon>
    </lineage>
</organism>
<comment type="function">
    <text evidence="1">Catalyzes the formation of acetyl phosphate from acetate and ATP. Can also catalyze the reverse reaction.</text>
</comment>
<comment type="catalytic activity">
    <reaction evidence="1">
        <text>acetate + ATP = acetyl phosphate + ADP</text>
        <dbReference type="Rhea" id="RHEA:11352"/>
        <dbReference type="ChEBI" id="CHEBI:22191"/>
        <dbReference type="ChEBI" id="CHEBI:30089"/>
        <dbReference type="ChEBI" id="CHEBI:30616"/>
        <dbReference type="ChEBI" id="CHEBI:456216"/>
        <dbReference type="EC" id="2.7.2.1"/>
    </reaction>
</comment>
<comment type="cofactor">
    <cofactor evidence="1">
        <name>Mg(2+)</name>
        <dbReference type="ChEBI" id="CHEBI:18420"/>
    </cofactor>
    <cofactor evidence="1">
        <name>Mn(2+)</name>
        <dbReference type="ChEBI" id="CHEBI:29035"/>
    </cofactor>
    <text evidence="1">Mg(2+). Can also accept Mn(2+).</text>
</comment>
<comment type="pathway">
    <text evidence="1">Metabolic intermediate biosynthesis; acetyl-CoA biosynthesis; acetyl-CoA from acetate: step 1/2.</text>
</comment>
<comment type="subunit">
    <text evidence="1">Homodimer.</text>
</comment>
<comment type="subcellular location">
    <subcellularLocation>
        <location evidence="1">Cytoplasm</location>
    </subcellularLocation>
</comment>
<comment type="similarity">
    <text evidence="1">Belongs to the acetokinase family.</text>
</comment>
<proteinExistence type="inferred from homology"/>
<feature type="chain" id="PRO_1000002275" description="Acetate kinase">
    <location>
        <begin position="1"/>
        <end position="398"/>
    </location>
</feature>
<feature type="active site" description="Proton donor/acceptor" evidence="1">
    <location>
        <position position="146"/>
    </location>
</feature>
<feature type="binding site" evidence="1">
    <location>
        <position position="8"/>
    </location>
    <ligand>
        <name>Mg(2+)</name>
        <dbReference type="ChEBI" id="CHEBI:18420"/>
    </ligand>
</feature>
<feature type="binding site" evidence="1">
    <location>
        <position position="15"/>
    </location>
    <ligand>
        <name>ATP</name>
        <dbReference type="ChEBI" id="CHEBI:30616"/>
    </ligand>
</feature>
<feature type="binding site" evidence="1">
    <location>
        <position position="89"/>
    </location>
    <ligand>
        <name>substrate</name>
    </ligand>
</feature>
<feature type="binding site" evidence="1">
    <location>
        <begin position="206"/>
        <end position="210"/>
    </location>
    <ligand>
        <name>ATP</name>
        <dbReference type="ChEBI" id="CHEBI:30616"/>
    </ligand>
</feature>
<feature type="binding site" evidence="1">
    <location>
        <begin position="283"/>
        <end position="285"/>
    </location>
    <ligand>
        <name>ATP</name>
        <dbReference type="ChEBI" id="CHEBI:30616"/>
    </ligand>
</feature>
<feature type="binding site" evidence="1">
    <location>
        <begin position="331"/>
        <end position="335"/>
    </location>
    <ligand>
        <name>ATP</name>
        <dbReference type="ChEBI" id="CHEBI:30616"/>
    </ligand>
</feature>
<feature type="binding site" evidence="1">
    <location>
        <position position="383"/>
    </location>
    <ligand>
        <name>Mg(2+)</name>
        <dbReference type="ChEBI" id="CHEBI:18420"/>
    </ligand>
</feature>
<feature type="site" description="Transition state stabilizer" evidence="1">
    <location>
        <position position="178"/>
    </location>
</feature>
<feature type="site" description="Transition state stabilizer" evidence="1">
    <location>
        <position position="239"/>
    </location>
</feature>
<gene>
    <name evidence="1" type="primary">ackA</name>
    <name type="ordered locus">M28_Spy0092</name>
</gene>
<evidence type="ECO:0000255" key="1">
    <source>
        <dbReference type="HAMAP-Rule" id="MF_00020"/>
    </source>
</evidence>
<protein>
    <recommendedName>
        <fullName evidence="1">Acetate kinase</fullName>
        <ecNumber evidence="1">2.7.2.1</ecNumber>
    </recommendedName>
    <alternativeName>
        <fullName evidence="1">Acetokinase</fullName>
    </alternativeName>
</protein>
<name>ACKA_STRPM</name>